<feature type="transit peptide" description="Chloroplast" evidence="3">
    <location>
        <begin position="1"/>
        <end position="30"/>
    </location>
</feature>
<feature type="chain" id="PRO_0000216341" description="Protein-ribulosamine 3-kinase, chloroplastic">
    <location>
        <begin position="31"/>
        <end position="326"/>
    </location>
</feature>
<feature type="active site" description="Proton acceptor" evidence="1">
    <location>
        <position position="230"/>
    </location>
</feature>
<feature type="binding site" evidence="2">
    <location>
        <begin position="125"/>
        <end position="127"/>
    </location>
    <ligand>
        <name>ATP</name>
        <dbReference type="ChEBI" id="CHEBI:30616"/>
    </ligand>
</feature>
<feature type="helix" evidence="7">
    <location>
        <begin position="37"/>
        <end position="44"/>
    </location>
</feature>
<feature type="strand" evidence="7">
    <location>
        <begin position="51"/>
        <end position="58"/>
    </location>
</feature>
<feature type="strand" evidence="7">
    <location>
        <begin position="64"/>
        <end position="70"/>
    </location>
</feature>
<feature type="strand" evidence="7">
    <location>
        <begin position="73"/>
        <end position="83"/>
    </location>
</feature>
<feature type="helix" evidence="7">
    <location>
        <begin position="86"/>
        <end position="100"/>
    </location>
</feature>
<feature type="strand" evidence="7">
    <location>
        <begin position="103"/>
        <end position="105"/>
    </location>
</feature>
<feature type="strand" evidence="7">
    <location>
        <begin position="109"/>
        <end position="114"/>
    </location>
</feature>
<feature type="strand" evidence="7">
    <location>
        <begin position="118"/>
        <end position="125"/>
    </location>
</feature>
<feature type="helix" evidence="7">
    <location>
        <begin position="136"/>
        <end position="149"/>
    </location>
</feature>
<feature type="strand" evidence="7">
    <location>
        <begin position="162"/>
        <end position="164"/>
    </location>
</feature>
<feature type="strand" evidence="7">
    <location>
        <begin position="167"/>
        <end position="169"/>
    </location>
</feature>
<feature type="helix" evidence="7">
    <location>
        <begin position="177"/>
        <end position="184"/>
    </location>
</feature>
<feature type="helix" evidence="7">
    <location>
        <begin position="186"/>
        <end position="197"/>
    </location>
</feature>
<feature type="helix" evidence="7">
    <location>
        <begin position="200"/>
        <end position="211"/>
    </location>
</feature>
<feature type="helix" evidence="7">
    <location>
        <begin position="214"/>
        <end position="217"/>
    </location>
</feature>
<feature type="strand" evidence="7">
    <location>
        <begin position="225"/>
        <end position="227"/>
    </location>
</feature>
<feature type="helix" evidence="7">
    <location>
        <begin position="233"/>
        <end position="235"/>
    </location>
</feature>
<feature type="strand" evidence="7">
    <location>
        <begin position="236"/>
        <end position="238"/>
    </location>
</feature>
<feature type="strand" evidence="7">
    <location>
        <begin position="244"/>
        <end position="246"/>
    </location>
</feature>
<feature type="strand" evidence="7">
    <location>
        <begin position="252"/>
        <end position="254"/>
    </location>
</feature>
<feature type="helix" evidence="7">
    <location>
        <begin position="256"/>
        <end position="260"/>
    </location>
</feature>
<feature type="helix" evidence="7">
    <location>
        <begin position="263"/>
        <end position="265"/>
    </location>
</feature>
<feature type="helix" evidence="7">
    <location>
        <begin position="270"/>
        <end position="279"/>
    </location>
</feature>
<feature type="turn" evidence="7">
    <location>
        <begin position="284"/>
        <end position="289"/>
    </location>
</feature>
<feature type="helix" evidence="7">
    <location>
        <begin position="290"/>
        <end position="305"/>
    </location>
</feature>
<feature type="helix" evidence="7">
    <location>
        <begin position="307"/>
        <end position="309"/>
    </location>
</feature>
<feature type="helix" evidence="7">
    <location>
        <begin position="310"/>
        <end position="323"/>
    </location>
</feature>
<protein>
    <recommendedName>
        <fullName evidence="6">Protein-ribulosamine 3-kinase, chloroplastic</fullName>
        <ecNumber evidence="4">2.7.1.172</ecNumber>
    </recommendedName>
    <alternativeName>
        <fullName evidence="5">Fructosamine 3-kinase-related protein</fullName>
        <shortName evidence="5">AtFN3K-RP</shortName>
    </alternativeName>
</protein>
<dbReference type="EC" id="2.7.1.172" evidence="4"/>
<dbReference type="EMBL" id="AL358732">
    <property type="protein sequence ID" value="CAB94144.1"/>
    <property type="status" value="ALT_SEQ"/>
    <property type="molecule type" value="Genomic_DNA"/>
</dbReference>
<dbReference type="EMBL" id="CP002686">
    <property type="protein sequence ID" value="AEE80151.1"/>
    <property type="molecule type" value="Genomic_DNA"/>
</dbReference>
<dbReference type="EMBL" id="AY070080">
    <property type="protein sequence ID" value="AAL49775.1"/>
    <property type="molecule type" value="mRNA"/>
</dbReference>
<dbReference type="EMBL" id="AY117356">
    <property type="protein sequence ID" value="AAM51431.1"/>
    <property type="molecule type" value="mRNA"/>
</dbReference>
<dbReference type="PIR" id="T50529">
    <property type="entry name" value="T50529"/>
</dbReference>
<dbReference type="RefSeq" id="NP_191667.2">
    <property type="nucleotide sequence ID" value="NM_115972.4"/>
</dbReference>
<dbReference type="PDB" id="6OID">
    <property type="method" value="X-ray"/>
    <property type="resolution" value="2.37 A"/>
    <property type="chains" value="A/B=30-326"/>
</dbReference>
<dbReference type="PDBsum" id="6OID"/>
<dbReference type="SMR" id="Q9LEW8"/>
<dbReference type="BioGRID" id="10594">
    <property type="interactions" value="1"/>
</dbReference>
<dbReference type="FunCoup" id="Q9LEW8">
    <property type="interactions" value="2497"/>
</dbReference>
<dbReference type="STRING" id="3702.Q9LEW8"/>
<dbReference type="PaxDb" id="3702-AT3G61080.1"/>
<dbReference type="ProteomicsDB" id="230590"/>
<dbReference type="EnsemblPlants" id="AT3G61080.1">
    <property type="protein sequence ID" value="AT3G61080.1"/>
    <property type="gene ID" value="AT3G61080"/>
</dbReference>
<dbReference type="GeneID" id="825280"/>
<dbReference type="Gramene" id="AT3G61080.1">
    <property type="protein sequence ID" value="AT3G61080.1"/>
    <property type="gene ID" value="AT3G61080"/>
</dbReference>
<dbReference type="KEGG" id="ath:AT3G61080"/>
<dbReference type="Araport" id="AT3G61080"/>
<dbReference type="TAIR" id="AT3G61080"/>
<dbReference type="eggNOG" id="KOG3021">
    <property type="taxonomic scope" value="Eukaryota"/>
</dbReference>
<dbReference type="HOGENOM" id="CLU_036517_0_1_1"/>
<dbReference type="InParanoid" id="Q9LEW8"/>
<dbReference type="OMA" id="RECDIAM"/>
<dbReference type="PhylomeDB" id="Q9LEW8"/>
<dbReference type="PRO" id="PR:Q9LEW8"/>
<dbReference type="Proteomes" id="UP000006548">
    <property type="component" value="Chromosome 3"/>
</dbReference>
<dbReference type="ExpressionAtlas" id="Q9LEW8">
    <property type="expression patterns" value="baseline and differential"/>
</dbReference>
<dbReference type="GO" id="GO:0009507">
    <property type="term" value="C:chloroplast"/>
    <property type="evidence" value="ECO:0007005"/>
    <property type="project" value="TAIR"/>
</dbReference>
<dbReference type="GO" id="GO:0005739">
    <property type="term" value="C:mitochondrion"/>
    <property type="evidence" value="ECO:0000304"/>
    <property type="project" value="TAIR"/>
</dbReference>
<dbReference type="GO" id="GO:0005524">
    <property type="term" value="F:ATP binding"/>
    <property type="evidence" value="ECO:0007669"/>
    <property type="project" value="UniProtKB-KW"/>
</dbReference>
<dbReference type="GO" id="GO:0016301">
    <property type="term" value="F:kinase activity"/>
    <property type="evidence" value="ECO:0000314"/>
    <property type="project" value="TAIR"/>
</dbReference>
<dbReference type="GO" id="GO:0102193">
    <property type="term" value="F:protein-ribulosamine 3-kinase activity"/>
    <property type="evidence" value="ECO:0007669"/>
    <property type="project" value="UniProtKB-EC"/>
</dbReference>
<dbReference type="FunFam" id="3.30.200.20:FF:000264">
    <property type="entry name" value="Protein-ribulosamine 3-kinase, chloroplastic"/>
    <property type="match status" value="1"/>
</dbReference>
<dbReference type="FunFam" id="3.90.1200.10:FF:000006">
    <property type="entry name" value="Protein-ribulosamine 3-kinase, chloroplastic"/>
    <property type="match status" value="1"/>
</dbReference>
<dbReference type="Gene3D" id="3.90.1200.10">
    <property type="match status" value="1"/>
</dbReference>
<dbReference type="Gene3D" id="3.30.200.20">
    <property type="entry name" value="Phosphorylase Kinase, domain 1"/>
    <property type="match status" value="1"/>
</dbReference>
<dbReference type="InterPro" id="IPR016477">
    <property type="entry name" value="Fructo-/Ketosamine-3-kinase"/>
</dbReference>
<dbReference type="InterPro" id="IPR011009">
    <property type="entry name" value="Kinase-like_dom_sf"/>
</dbReference>
<dbReference type="PANTHER" id="PTHR12149">
    <property type="entry name" value="FRUCTOSAMINE 3 KINASE-RELATED PROTEIN"/>
    <property type="match status" value="1"/>
</dbReference>
<dbReference type="PANTHER" id="PTHR12149:SF8">
    <property type="entry name" value="PROTEIN-RIBULOSAMINE 3-KINASE"/>
    <property type="match status" value="1"/>
</dbReference>
<dbReference type="Pfam" id="PF03881">
    <property type="entry name" value="Fructosamin_kin"/>
    <property type="match status" value="1"/>
</dbReference>
<dbReference type="PIRSF" id="PIRSF006221">
    <property type="entry name" value="Ketosamine-3-kinase"/>
    <property type="match status" value="1"/>
</dbReference>
<dbReference type="SUPFAM" id="SSF56112">
    <property type="entry name" value="Protein kinase-like (PK-like)"/>
    <property type="match status" value="1"/>
</dbReference>
<gene>
    <name type="ordered locus">At3g61080</name>
    <name type="ORF">T27I15_170</name>
</gene>
<sequence length="326" mass="36471">MAVASLSICFSARPHLLLRNFSPRPKFVAMAAMSEDPIREWILTEGKATQITKIGSVGGGCINLASHYQTDAGSFFVKTNRSIGPAMFEGEALGLEAMYETRTIRVPNPHKAGELPTGGSYIIMEFIDFGGSRGNQAELGRKLAEMHKAGKTSKGFGFEVDNTIGSTPQINTWSSDWIEFYGEKRLGYQLKLARDQYGDSAIYQKGHTLIQNMAPLFENVVIEPCLLHGDLWSGNIAYDKNNEPVILDPACYYGHNEADFGMSWCAGFGESFYNAYFKVMPKQAGYEKRRDLYLLYHYLNHYNLFGSGYRSSAMSIIDDYLRMLKA</sequence>
<organism>
    <name type="scientific">Arabidopsis thaliana</name>
    <name type="common">Mouse-ear cress</name>
    <dbReference type="NCBI Taxonomy" id="3702"/>
    <lineage>
        <taxon>Eukaryota</taxon>
        <taxon>Viridiplantae</taxon>
        <taxon>Streptophyta</taxon>
        <taxon>Embryophyta</taxon>
        <taxon>Tracheophyta</taxon>
        <taxon>Spermatophyta</taxon>
        <taxon>Magnoliopsida</taxon>
        <taxon>eudicotyledons</taxon>
        <taxon>Gunneridae</taxon>
        <taxon>Pentapetalae</taxon>
        <taxon>rosids</taxon>
        <taxon>malvids</taxon>
        <taxon>Brassicales</taxon>
        <taxon>Brassicaceae</taxon>
        <taxon>Camelineae</taxon>
        <taxon>Arabidopsis</taxon>
    </lineage>
</organism>
<keyword id="KW-0002">3D-structure</keyword>
<keyword id="KW-0067">ATP-binding</keyword>
<keyword id="KW-0150">Chloroplast</keyword>
<keyword id="KW-0418">Kinase</keyword>
<keyword id="KW-0547">Nucleotide-binding</keyword>
<keyword id="KW-0934">Plastid</keyword>
<keyword id="KW-1185">Reference proteome</keyword>
<keyword id="KW-0808">Transferase</keyword>
<keyword id="KW-0809">Transit peptide</keyword>
<evidence type="ECO:0000250" key="1">
    <source>
        <dbReference type="UniProtKB" id="P9WI99"/>
    </source>
</evidence>
<evidence type="ECO:0000250" key="2">
    <source>
        <dbReference type="UniProtKB" id="Q9HA64"/>
    </source>
</evidence>
<evidence type="ECO:0000255" key="3"/>
<evidence type="ECO:0000269" key="4">
    <source>
    </source>
</evidence>
<evidence type="ECO:0000303" key="5">
    <source>
    </source>
</evidence>
<evidence type="ECO:0000305" key="6"/>
<evidence type="ECO:0007829" key="7">
    <source>
        <dbReference type="PDB" id="6OID"/>
    </source>
</evidence>
<proteinExistence type="evidence at protein level"/>
<comment type="function">
    <text evidence="4">Initiates a process leading to the deglycation of proteins (PubMed:15705060). Phosphorylates low-molecular-mass and protein-bound erythrulosamines and ribulosamines, but not fructosamines or psicosamines, on the third carbon of the sugar moiety (PubMed:15705060). Protein-bound erythrulosamine 3-phosphates and ribulosamine 3-phosphates are unstable and decompose under physiological conditions (PubMed:15705060).</text>
</comment>
<comment type="catalytic activity">
    <reaction evidence="4">
        <text>N(6)-D-ribulosyl-L-lysyl-[protein] + ATP = N(6)-(3-O-phospho-D-ribulosyl)-L-lysyl-[protein] + ADP + H(+)</text>
        <dbReference type="Rhea" id="RHEA:48432"/>
        <dbReference type="Rhea" id="RHEA-COMP:12103"/>
        <dbReference type="Rhea" id="RHEA-COMP:12104"/>
        <dbReference type="ChEBI" id="CHEBI:15378"/>
        <dbReference type="ChEBI" id="CHEBI:30616"/>
        <dbReference type="ChEBI" id="CHEBI:90418"/>
        <dbReference type="ChEBI" id="CHEBI:90420"/>
        <dbReference type="ChEBI" id="CHEBI:456216"/>
        <dbReference type="EC" id="2.7.1.172"/>
    </reaction>
    <physiologicalReaction direction="left-to-right" evidence="4">
        <dbReference type="Rhea" id="RHEA:48433"/>
    </physiologicalReaction>
</comment>
<comment type="catalytic activity">
    <reaction evidence="4">
        <text>N(6)-(D-erythrulosyl)-L-lysyl-[protein] + ATP = N(6)-(3-O-phospho-D-erythrulosyl)-L-lysyl-[protein] + ADP + H(+)</text>
        <dbReference type="Rhea" id="RHEA:61396"/>
        <dbReference type="Rhea" id="RHEA-COMP:15794"/>
        <dbReference type="Rhea" id="RHEA-COMP:15799"/>
        <dbReference type="ChEBI" id="CHEBI:15378"/>
        <dbReference type="ChEBI" id="CHEBI:30616"/>
        <dbReference type="ChEBI" id="CHEBI:144587"/>
        <dbReference type="ChEBI" id="CHEBI:144624"/>
        <dbReference type="ChEBI" id="CHEBI:456216"/>
    </reaction>
    <physiologicalReaction direction="left-to-right" evidence="4">
        <dbReference type="Rhea" id="RHEA:61397"/>
    </physiologicalReaction>
</comment>
<comment type="biophysicochemical properties">
    <kinetics>
        <KM evidence="4">135 uM for ribuloselysine</KM>
        <KM evidence="4">25 uM for erythruloselysine</KM>
        <KM evidence="4">274 uM for lysozyme glycated with ribose</KM>
        <KM evidence="4">104 uM for lysozyme glycated with erythrose</KM>
        <Vmax evidence="4">685.0 umol/min/g enzyme with ribuloselysine as substrate</Vmax>
        <Vmax evidence="4">749.0 umol/min/g enzyme with erythruloselysine as substrate</Vmax>
        <Vmax evidence="4">43.0 umol/min/g enzyme with lysozyme glycated with ribose as substrate</Vmax>
        <Vmax evidence="4">20.0 umol/min/g enzyme with lysozyme glycated with erythros as substrate</Vmax>
    </kinetics>
</comment>
<comment type="subcellular location">
    <subcellularLocation>
        <location evidence="3">Plastid</location>
        <location evidence="3">Chloroplast</location>
    </subcellularLocation>
</comment>
<comment type="similarity">
    <text evidence="6">Belongs to the fructosamine kinase family.</text>
</comment>
<comment type="sequence caution" evidence="6">
    <conflict type="erroneous gene model prediction">
        <sequence resource="EMBL-CDS" id="CAB94144"/>
    </conflict>
</comment>
<name>FN3KR_ARATH</name>
<accession>Q9LEW8</accession>
<accession>Q8VYR1</accession>
<reference key="1">
    <citation type="journal article" date="2000" name="Nature">
        <title>Sequence and analysis of chromosome 3 of the plant Arabidopsis thaliana.</title>
        <authorList>
            <person name="Salanoubat M."/>
            <person name="Lemcke K."/>
            <person name="Rieger M."/>
            <person name="Ansorge W."/>
            <person name="Unseld M."/>
            <person name="Fartmann B."/>
            <person name="Valle G."/>
            <person name="Bloecker H."/>
            <person name="Perez-Alonso M."/>
            <person name="Obermaier B."/>
            <person name="Delseny M."/>
            <person name="Boutry M."/>
            <person name="Grivell L.A."/>
            <person name="Mache R."/>
            <person name="Puigdomenech P."/>
            <person name="De Simone V."/>
            <person name="Choisne N."/>
            <person name="Artiguenave F."/>
            <person name="Robert C."/>
            <person name="Brottier P."/>
            <person name="Wincker P."/>
            <person name="Cattolico L."/>
            <person name="Weissenbach J."/>
            <person name="Saurin W."/>
            <person name="Quetier F."/>
            <person name="Schaefer M."/>
            <person name="Mueller-Auer S."/>
            <person name="Gabel C."/>
            <person name="Fuchs M."/>
            <person name="Benes V."/>
            <person name="Wurmbach E."/>
            <person name="Drzonek H."/>
            <person name="Erfle H."/>
            <person name="Jordan N."/>
            <person name="Bangert S."/>
            <person name="Wiedelmann R."/>
            <person name="Kranz H."/>
            <person name="Voss H."/>
            <person name="Holland R."/>
            <person name="Brandt P."/>
            <person name="Nyakatura G."/>
            <person name="Vezzi A."/>
            <person name="D'Angelo M."/>
            <person name="Pallavicini A."/>
            <person name="Toppo S."/>
            <person name="Simionati B."/>
            <person name="Conrad A."/>
            <person name="Hornischer K."/>
            <person name="Kauer G."/>
            <person name="Loehnert T.-H."/>
            <person name="Nordsiek G."/>
            <person name="Reichelt J."/>
            <person name="Scharfe M."/>
            <person name="Schoen O."/>
            <person name="Bargues M."/>
            <person name="Terol J."/>
            <person name="Climent J."/>
            <person name="Navarro P."/>
            <person name="Collado C."/>
            <person name="Perez-Perez A."/>
            <person name="Ottenwaelder B."/>
            <person name="Duchemin D."/>
            <person name="Cooke R."/>
            <person name="Laudie M."/>
            <person name="Berger-Llauro C."/>
            <person name="Purnelle B."/>
            <person name="Masuy D."/>
            <person name="de Haan M."/>
            <person name="Maarse A.C."/>
            <person name="Alcaraz J.-P."/>
            <person name="Cottet A."/>
            <person name="Casacuberta E."/>
            <person name="Monfort A."/>
            <person name="Argiriou A."/>
            <person name="Flores M."/>
            <person name="Liguori R."/>
            <person name="Vitale D."/>
            <person name="Mannhaupt G."/>
            <person name="Haase D."/>
            <person name="Schoof H."/>
            <person name="Rudd S."/>
            <person name="Zaccaria P."/>
            <person name="Mewes H.-W."/>
            <person name="Mayer K.F.X."/>
            <person name="Kaul S."/>
            <person name="Town C.D."/>
            <person name="Koo H.L."/>
            <person name="Tallon L.J."/>
            <person name="Jenkins J."/>
            <person name="Rooney T."/>
            <person name="Rizzo M."/>
            <person name="Walts A."/>
            <person name="Utterback T."/>
            <person name="Fujii C.Y."/>
            <person name="Shea T.P."/>
            <person name="Creasy T.H."/>
            <person name="Haas B."/>
            <person name="Maiti R."/>
            <person name="Wu D."/>
            <person name="Peterson J."/>
            <person name="Van Aken S."/>
            <person name="Pai G."/>
            <person name="Militscher J."/>
            <person name="Sellers P."/>
            <person name="Gill J.E."/>
            <person name="Feldblyum T.V."/>
            <person name="Preuss D."/>
            <person name="Lin X."/>
            <person name="Nierman W.C."/>
            <person name="Salzberg S.L."/>
            <person name="White O."/>
            <person name="Venter J.C."/>
            <person name="Fraser C.M."/>
            <person name="Kaneko T."/>
            <person name="Nakamura Y."/>
            <person name="Sato S."/>
            <person name="Kato T."/>
            <person name="Asamizu E."/>
            <person name="Sasamoto S."/>
            <person name="Kimura T."/>
            <person name="Idesawa K."/>
            <person name="Kawashima K."/>
            <person name="Kishida Y."/>
            <person name="Kiyokawa C."/>
            <person name="Kohara M."/>
            <person name="Matsumoto M."/>
            <person name="Matsuno A."/>
            <person name="Muraki A."/>
            <person name="Nakayama S."/>
            <person name="Nakazaki N."/>
            <person name="Shinpo S."/>
            <person name="Takeuchi C."/>
            <person name="Wada T."/>
            <person name="Watanabe A."/>
            <person name="Yamada M."/>
            <person name="Yasuda M."/>
            <person name="Tabata S."/>
        </authorList>
    </citation>
    <scope>NUCLEOTIDE SEQUENCE [LARGE SCALE GENOMIC DNA]</scope>
    <source>
        <strain>cv. Columbia</strain>
    </source>
</reference>
<reference key="2">
    <citation type="journal article" date="2017" name="Plant J.">
        <title>Araport11: a complete reannotation of the Arabidopsis thaliana reference genome.</title>
        <authorList>
            <person name="Cheng C.Y."/>
            <person name="Krishnakumar V."/>
            <person name="Chan A.P."/>
            <person name="Thibaud-Nissen F."/>
            <person name="Schobel S."/>
            <person name="Town C.D."/>
        </authorList>
    </citation>
    <scope>GENOME REANNOTATION</scope>
    <source>
        <strain>cv. Columbia</strain>
    </source>
</reference>
<reference key="3">
    <citation type="journal article" date="2003" name="Science">
        <title>Empirical analysis of transcriptional activity in the Arabidopsis genome.</title>
        <authorList>
            <person name="Yamada K."/>
            <person name="Lim J."/>
            <person name="Dale J.M."/>
            <person name="Chen H."/>
            <person name="Shinn P."/>
            <person name="Palm C.J."/>
            <person name="Southwick A.M."/>
            <person name="Wu H.C."/>
            <person name="Kim C.J."/>
            <person name="Nguyen M."/>
            <person name="Pham P.K."/>
            <person name="Cheuk R.F."/>
            <person name="Karlin-Newmann G."/>
            <person name="Liu S.X."/>
            <person name="Lam B."/>
            <person name="Sakano H."/>
            <person name="Wu T."/>
            <person name="Yu G."/>
            <person name="Miranda M."/>
            <person name="Quach H.L."/>
            <person name="Tripp M."/>
            <person name="Chang C.H."/>
            <person name="Lee J.M."/>
            <person name="Toriumi M.J."/>
            <person name="Chan M.M."/>
            <person name="Tang C.C."/>
            <person name="Onodera C.S."/>
            <person name="Deng J.M."/>
            <person name="Akiyama K."/>
            <person name="Ansari Y."/>
            <person name="Arakawa T."/>
            <person name="Banh J."/>
            <person name="Banno F."/>
            <person name="Bowser L."/>
            <person name="Brooks S.Y."/>
            <person name="Carninci P."/>
            <person name="Chao Q."/>
            <person name="Choy N."/>
            <person name="Enju A."/>
            <person name="Goldsmith A.D."/>
            <person name="Gurjal M."/>
            <person name="Hansen N.F."/>
            <person name="Hayashizaki Y."/>
            <person name="Johnson-Hopson C."/>
            <person name="Hsuan V.W."/>
            <person name="Iida K."/>
            <person name="Karnes M."/>
            <person name="Khan S."/>
            <person name="Koesema E."/>
            <person name="Ishida J."/>
            <person name="Jiang P.X."/>
            <person name="Jones T."/>
            <person name="Kawai J."/>
            <person name="Kamiya A."/>
            <person name="Meyers C."/>
            <person name="Nakajima M."/>
            <person name="Narusaka M."/>
            <person name="Seki M."/>
            <person name="Sakurai T."/>
            <person name="Satou M."/>
            <person name="Tamse R."/>
            <person name="Vaysberg M."/>
            <person name="Wallender E.K."/>
            <person name="Wong C."/>
            <person name="Yamamura Y."/>
            <person name="Yuan S."/>
            <person name="Shinozaki K."/>
            <person name="Davis R.W."/>
            <person name="Theologis A."/>
            <person name="Ecker J.R."/>
        </authorList>
    </citation>
    <scope>NUCLEOTIDE SEQUENCE [LARGE SCALE MRNA]</scope>
    <source>
        <strain>cv. Columbia</strain>
    </source>
</reference>
<reference key="4">
    <citation type="journal article" date="2005" name="Biochem. J.">
        <title>Plant ribulosamine/erythrulosamine 3-kinase, a putative protein-repair enzyme.</title>
        <authorList>
            <person name="Fortpied J."/>
            <person name="Gemayel R."/>
            <person name="Stroobant V."/>
            <person name="van Schaftingen E."/>
        </authorList>
    </citation>
    <scope>FUNCTION</scope>
    <scope>CATALYTIC ACTIVITY</scope>
    <scope>BIOPHYSICOCHEMICAL PROPERTIES</scope>
</reference>